<keyword id="KW-0627">Porphyrin biosynthesis</keyword>
<keyword id="KW-0808">Transferase</keyword>
<gene>
    <name evidence="1" type="primary">hemC</name>
    <name type="ordered locus">EFER_3700</name>
</gene>
<protein>
    <recommendedName>
        <fullName evidence="1">Porphobilinogen deaminase</fullName>
        <shortName evidence="1">PBG</shortName>
        <ecNumber evidence="1">2.5.1.61</ecNumber>
    </recommendedName>
    <alternativeName>
        <fullName evidence="1">Hydroxymethylbilane synthase</fullName>
        <shortName evidence="1">HMBS</shortName>
    </alternativeName>
    <alternativeName>
        <fullName evidence="1">Pre-uroporphyrinogen synthase</fullName>
    </alternativeName>
</protein>
<organism>
    <name type="scientific">Escherichia fergusonii (strain ATCC 35469 / DSM 13698 / CCUG 18766 / IAM 14443 / JCM 21226 / LMG 7866 / NBRC 102419 / NCTC 12128 / CDC 0568-73)</name>
    <dbReference type="NCBI Taxonomy" id="585054"/>
    <lineage>
        <taxon>Bacteria</taxon>
        <taxon>Pseudomonadati</taxon>
        <taxon>Pseudomonadota</taxon>
        <taxon>Gammaproteobacteria</taxon>
        <taxon>Enterobacterales</taxon>
        <taxon>Enterobacteriaceae</taxon>
        <taxon>Escherichia</taxon>
    </lineage>
</organism>
<reference key="1">
    <citation type="journal article" date="2009" name="PLoS Genet.">
        <title>Organised genome dynamics in the Escherichia coli species results in highly diverse adaptive paths.</title>
        <authorList>
            <person name="Touchon M."/>
            <person name="Hoede C."/>
            <person name="Tenaillon O."/>
            <person name="Barbe V."/>
            <person name="Baeriswyl S."/>
            <person name="Bidet P."/>
            <person name="Bingen E."/>
            <person name="Bonacorsi S."/>
            <person name="Bouchier C."/>
            <person name="Bouvet O."/>
            <person name="Calteau A."/>
            <person name="Chiapello H."/>
            <person name="Clermont O."/>
            <person name="Cruveiller S."/>
            <person name="Danchin A."/>
            <person name="Diard M."/>
            <person name="Dossat C."/>
            <person name="Karoui M.E."/>
            <person name="Frapy E."/>
            <person name="Garry L."/>
            <person name="Ghigo J.M."/>
            <person name="Gilles A.M."/>
            <person name="Johnson J."/>
            <person name="Le Bouguenec C."/>
            <person name="Lescat M."/>
            <person name="Mangenot S."/>
            <person name="Martinez-Jehanne V."/>
            <person name="Matic I."/>
            <person name="Nassif X."/>
            <person name="Oztas S."/>
            <person name="Petit M.A."/>
            <person name="Pichon C."/>
            <person name="Rouy Z."/>
            <person name="Ruf C.S."/>
            <person name="Schneider D."/>
            <person name="Tourret J."/>
            <person name="Vacherie B."/>
            <person name="Vallenet D."/>
            <person name="Medigue C."/>
            <person name="Rocha E.P.C."/>
            <person name="Denamur E."/>
        </authorList>
    </citation>
    <scope>NUCLEOTIDE SEQUENCE [LARGE SCALE GENOMIC DNA]</scope>
    <source>
        <strain>ATCC 35469 / DSM 13698 / BCRC 15582 / CCUG 18766 / IAM 14443 / JCM 21226 / LMG 7866 / NBRC 102419 / NCTC 12128 / CDC 0568-73</strain>
    </source>
</reference>
<feature type="chain" id="PRO_1000119218" description="Porphobilinogen deaminase">
    <location>
        <begin position="1"/>
        <end position="313"/>
    </location>
</feature>
<feature type="modified residue" description="S-(dipyrrolylmethanemethyl)cysteine" evidence="1">
    <location>
        <position position="242"/>
    </location>
</feature>
<proteinExistence type="inferred from homology"/>
<dbReference type="EC" id="2.5.1.61" evidence="1"/>
<dbReference type="EMBL" id="CU928158">
    <property type="protein sequence ID" value="CAQ91161.1"/>
    <property type="molecule type" value="Genomic_DNA"/>
</dbReference>
<dbReference type="RefSeq" id="WP_000886612.1">
    <property type="nucleotide sequence ID" value="NC_011740.1"/>
</dbReference>
<dbReference type="SMR" id="B7LU53"/>
<dbReference type="GeneID" id="75059699"/>
<dbReference type="KEGG" id="efe:EFER_3700"/>
<dbReference type="HOGENOM" id="CLU_019704_0_2_6"/>
<dbReference type="OrthoDB" id="9810298at2"/>
<dbReference type="UniPathway" id="UPA00251">
    <property type="reaction ID" value="UER00319"/>
</dbReference>
<dbReference type="Proteomes" id="UP000000745">
    <property type="component" value="Chromosome"/>
</dbReference>
<dbReference type="GO" id="GO:0005737">
    <property type="term" value="C:cytoplasm"/>
    <property type="evidence" value="ECO:0007669"/>
    <property type="project" value="TreeGrafter"/>
</dbReference>
<dbReference type="GO" id="GO:0004418">
    <property type="term" value="F:hydroxymethylbilane synthase activity"/>
    <property type="evidence" value="ECO:0007669"/>
    <property type="project" value="UniProtKB-UniRule"/>
</dbReference>
<dbReference type="GO" id="GO:0006782">
    <property type="term" value="P:protoporphyrinogen IX biosynthetic process"/>
    <property type="evidence" value="ECO:0007669"/>
    <property type="project" value="UniProtKB-UniRule"/>
</dbReference>
<dbReference type="CDD" id="cd13646">
    <property type="entry name" value="PBP2_EcHMBS_like"/>
    <property type="match status" value="1"/>
</dbReference>
<dbReference type="FunFam" id="3.30.160.40:FF:000002">
    <property type="entry name" value="Porphobilinogen deaminase"/>
    <property type="match status" value="1"/>
</dbReference>
<dbReference type="FunFam" id="3.40.190.10:FF:000004">
    <property type="entry name" value="Porphobilinogen deaminase"/>
    <property type="match status" value="1"/>
</dbReference>
<dbReference type="FunFam" id="3.40.190.10:FF:000005">
    <property type="entry name" value="Porphobilinogen deaminase"/>
    <property type="match status" value="1"/>
</dbReference>
<dbReference type="Gene3D" id="3.40.190.10">
    <property type="entry name" value="Periplasmic binding protein-like II"/>
    <property type="match status" value="2"/>
</dbReference>
<dbReference type="Gene3D" id="3.30.160.40">
    <property type="entry name" value="Porphobilinogen deaminase, C-terminal domain"/>
    <property type="match status" value="1"/>
</dbReference>
<dbReference type="HAMAP" id="MF_00260">
    <property type="entry name" value="Porphobil_deam"/>
    <property type="match status" value="1"/>
</dbReference>
<dbReference type="InterPro" id="IPR000860">
    <property type="entry name" value="HemC"/>
</dbReference>
<dbReference type="InterPro" id="IPR022419">
    <property type="entry name" value="Porphobilin_deaminase_cofac_BS"/>
</dbReference>
<dbReference type="InterPro" id="IPR022417">
    <property type="entry name" value="Porphobilin_deaminase_N"/>
</dbReference>
<dbReference type="InterPro" id="IPR022418">
    <property type="entry name" value="Porphobilinogen_deaminase_C"/>
</dbReference>
<dbReference type="InterPro" id="IPR036803">
    <property type="entry name" value="Porphobilinogen_deaminase_C_sf"/>
</dbReference>
<dbReference type="NCBIfam" id="TIGR00212">
    <property type="entry name" value="hemC"/>
    <property type="match status" value="1"/>
</dbReference>
<dbReference type="PANTHER" id="PTHR11557">
    <property type="entry name" value="PORPHOBILINOGEN DEAMINASE"/>
    <property type="match status" value="1"/>
</dbReference>
<dbReference type="PANTHER" id="PTHR11557:SF0">
    <property type="entry name" value="PORPHOBILINOGEN DEAMINASE"/>
    <property type="match status" value="1"/>
</dbReference>
<dbReference type="Pfam" id="PF01379">
    <property type="entry name" value="Porphobil_deam"/>
    <property type="match status" value="1"/>
</dbReference>
<dbReference type="Pfam" id="PF03900">
    <property type="entry name" value="Porphobil_deamC"/>
    <property type="match status" value="1"/>
</dbReference>
<dbReference type="PIRSF" id="PIRSF001438">
    <property type="entry name" value="4pyrrol_synth_OHMeBilane_synth"/>
    <property type="match status" value="1"/>
</dbReference>
<dbReference type="PRINTS" id="PR00151">
    <property type="entry name" value="PORPHBDMNASE"/>
</dbReference>
<dbReference type="SUPFAM" id="SSF53850">
    <property type="entry name" value="Periplasmic binding protein-like II"/>
    <property type="match status" value="1"/>
</dbReference>
<dbReference type="SUPFAM" id="SSF54782">
    <property type="entry name" value="Porphobilinogen deaminase (hydroxymethylbilane synthase), C-terminal domain"/>
    <property type="match status" value="1"/>
</dbReference>
<dbReference type="PROSITE" id="PS00533">
    <property type="entry name" value="PORPHOBILINOGEN_DEAM"/>
    <property type="match status" value="1"/>
</dbReference>
<evidence type="ECO:0000255" key="1">
    <source>
        <dbReference type="HAMAP-Rule" id="MF_00260"/>
    </source>
</evidence>
<accession>B7LU53</accession>
<name>HEM3_ESCF3</name>
<sequence>MLDNVLRIATRQSPLALWQAHYVKDALMAKHPGLTVELVPMVTRGDVILDTPLAKVGGKGLFVKELEVALLENRADIAVHSMKDVPVEFPQGLGLVTICEREDPRDAFVSNKYASLDELPAGSIVGTSSLRRQCQLAERRPDLIIRSLRGNVGTRLSKLDNGEYDAIILAVAGLKRLGLESRIRDALPPEVSLPAVGQGAVGIECRLDDTRTRELLAALNHPETALRVTAERAMNTRLEGGCQVPIGSYAELIGGEIWLRALVGAPDGSQMIRGERRGSPQDAEKMGISLAEELLNNGARAILADVYNGDAPV</sequence>
<comment type="function">
    <text evidence="1">Tetrapolymerization of the monopyrrole PBG into the hydroxymethylbilane pre-uroporphyrinogen in several discrete steps.</text>
</comment>
<comment type="catalytic activity">
    <reaction evidence="1">
        <text>4 porphobilinogen + H2O = hydroxymethylbilane + 4 NH4(+)</text>
        <dbReference type="Rhea" id="RHEA:13185"/>
        <dbReference type="ChEBI" id="CHEBI:15377"/>
        <dbReference type="ChEBI" id="CHEBI:28938"/>
        <dbReference type="ChEBI" id="CHEBI:57845"/>
        <dbReference type="ChEBI" id="CHEBI:58126"/>
        <dbReference type="EC" id="2.5.1.61"/>
    </reaction>
</comment>
<comment type="cofactor">
    <cofactor evidence="1">
        <name>dipyrromethane</name>
        <dbReference type="ChEBI" id="CHEBI:60342"/>
    </cofactor>
    <text evidence="1">Binds 1 dipyrromethane group covalently.</text>
</comment>
<comment type="pathway">
    <text evidence="1">Porphyrin-containing compound metabolism; protoporphyrin-IX biosynthesis; coproporphyrinogen-III from 5-aminolevulinate: step 2/4.</text>
</comment>
<comment type="subunit">
    <text evidence="1">Monomer.</text>
</comment>
<comment type="miscellaneous">
    <text evidence="1">The porphobilinogen subunits are added to the dipyrromethane group.</text>
</comment>
<comment type="similarity">
    <text evidence="1">Belongs to the HMBS family.</text>
</comment>